<comment type="function">
    <text evidence="1">Catalyzes the ATP-dependent amination of UTP to CTP with either L-glutamine or ammonia as the source of nitrogen. Regulates intracellular CTP levels through interactions with the four ribonucleotide triphosphates.</text>
</comment>
<comment type="catalytic activity">
    <reaction evidence="1">
        <text>UTP + L-glutamine + ATP + H2O = CTP + L-glutamate + ADP + phosphate + 2 H(+)</text>
        <dbReference type="Rhea" id="RHEA:26426"/>
        <dbReference type="ChEBI" id="CHEBI:15377"/>
        <dbReference type="ChEBI" id="CHEBI:15378"/>
        <dbReference type="ChEBI" id="CHEBI:29985"/>
        <dbReference type="ChEBI" id="CHEBI:30616"/>
        <dbReference type="ChEBI" id="CHEBI:37563"/>
        <dbReference type="ChEBI" id="CHEBI:43474"/>
        <dbReference type="ChEBI" id="CHEBI:46398"/>
        <dbReference type="ChEBI" id="CHEBI:58359"/>
        <dbReference type="ChEBI" id="CHEBI:456216"/>
        <dbReference type="EC" id="6.3.4.2"/>
    </reaction>
</comment>
<comment type="catalytic activity">
    <reaction evidence="1">
        <text>L-glutamine + H2O = L-glutamate + NH4(+)</text>
        <dbReference type="Rhea" id="RHEA:15889"/>
        <dbReference type="ChEBI" id="CHEBI:15377"/>
        <dbReference type="ChEBI" id="CHEBI:28938"/>
        <dbReference type="ChEBI" id="CHEBI:29985"/>
        <dbReference type="ChEBI" id="CHEBI:58359"/>
    </reaction>
</comment>
<comment type="catalytic activity">
    <reaction evidence="1">
        <text>UTP + NH4(+) + ATP = CTP + ADP + phosphate + 2 H(+)</text>
        <dbReference type="Rhea" id="RHEA:16597"/>
        <dbReference type="ChEBI" id="CHEBI:15378"/>
        <dbReference type="ChEBI" id="CHEBI:28938"/>
        <dbReference type="ChEBI" id="CHEBI:30616"/>
        <dbReference type="ChEBI" id="CHEBI:37563"/>
        <dbReference type="ChEBI" id="CHEBI:43474"/>
        <dbReference type="ChEBI" id="CHEBI:46398"/>
        <dbReference type="ChEBI" id="CHEBI:456216"/>
    </reaction>
</comment>
<comment type="activity regulation">
    <text evidence="1">Allosterically activated by GTP, when glutamine is the substrate; GTP has no effect on the reaction when ammonia is the substrate. The allosteric effector GTP functions by stabilizing the protein conformation that binds the tetrahedral intermediate(s) formed during glutamine hydrolysis. Inhibited by the product CTP, via allosteric rather than competitive inhibition.</text>
</comment>
<comment type="pathway">
    <text evidence="1">Pyrimidine metabolism; CTP biosynthesis via de novo pathway; CTP from UDP: step 2/2.</text>
</comment>
<comment type="subunit">
    <text evidence="1">Homotetramer.</text>
</comment>
<comment type="miscellaneous">
    <text evidence="1">CTPSs have evolved a hybrid strategy for distinguishing between UTP and CTP. The overlapping regions of the product feedback inhibitory and substrate sites recognize a common feature in both compounds, the triphosphate moiety. To differentiate isosteric substrate and product pyrimidine rings, an additional pocket far from the expected kinase/ligase catalytic site, specifically recognizes the cytosine and ribose portions of the product inhibitor.</text>
</comment>
<comment type="similarity">
    <text evidence="1">Belongs to the CTP synthase family.</text>
</comment>
<dbReference type="EC" id="6.3.4.2" evidence="1"/>
<dbReference type="EMBL" id="CP000513">
    <property type="protein sequence ID" value="ABQ14066.1"/>
    <property type="molecule type" value="Genomic_DNA"/>
</dbReference>
<dbReference type="RefSeq" id="WP_012030703.1">
    <property type="nucleotide sequence ID" value="NC_009446.1"/>
</dbReference>
<dbReference type="SMR" id="A5EW22"/>
<dbReference type="STRING" id="246195.DNO_0360"/>
<dbReference type="KEGG" id="dno:DNO_0360"/>
<dbReference type="eggNOG" id="COG0504">
    <property type="taxonomic scope" value="Bacteria"/>
</dbReference>
<dbReference type="HOGENOM" id="CLU_011675_5_0_6"/>
<dbReference type="OrthoDB" id="9801107at2"/>
<dbReference type="UniPathway" id="UPA00159">
    <property type="reaction ID" value="UER00277"/>
</dbReference>
<dbReference type="Proteomes" id="UP000000248">
    <property type="component" value="Chromosome"/>
</dbReference>
<dbReference type="GO" id="GO:0005829">
    <property type="term" value="C:cytosol"/>
    <property type="evidence" value="ECO:0007669"/>
    <property type="project" value="TreeGrafter"/>
</dbReference>
<dbReference type="GO" id="GO:0005524">
    <property type="term" value="F:ATP binding"/>
    <property type="evidence" value="ECO:0007669"/>
    <property type="project" value="UniProtKB-KW"/>
</dbReference>
<dbReference type="GO" id="GO:0003883">
    <property type="term" value="F:CTP synthase activity"/>
    <property type="evidence" value="ECO:0007669"/>
    <property type="project" value="UniProtKB-UniRule"/>
</dbReference>
<dbReference type="GO" id="GO:0004359">
    <property type="term" value="F:glutaminase activity"/>
    <property type="evidence" value="ECO:0007669"/>
    <property type="project" value="RHEA"/>
</dbReference>
<dbReference type="GO" id="GO:0042802">
    <property type="term" value="F:identical protein binding"/>
    <property type="evidence" value="ECO:0007669"/>
    <property type="project" value="TreeGrafter"/>
</dbReference>
<dbReference type="GO" id="GO:0046872">
    <property type="term" value="F:metal ion binding"/>
    <property type="evidence" value="ECO:0007669"/>
    <property type="project" value="UniProtKB-KW"/>
</dbReference>
<dbReference type="GO" id="GO:0044210">
    <property type="term" value="P:'de novo' CTP biosynthetic process"/>
    <property type="evidence" value="ECO:0007669"/>
    <property type="project" value="UniProtKB-UniRule"/>
</dbReference>
<dbReference type="GO" id="GO:0019856">
    <property type="term" value="P:pyrimidine nucleobase biosynthetic process"/>
    <property type="evidence" value="ECO:0007669"/>
    <property type="project" value="TreeGrafter"/>
</dbReference>
<dbReference type="CDD" id="cd03113">
    <property type="entry name" value="CTPS_N"/>
    <property type="match status" value="1"/>
</dbReference>
<dbReference type="CDD" id="cd01746">
    <property type="entry name" value="GATase1_CTP_Synthase"/>
    <property type="match status" value="1"/>
</dbReference>
<dbReference type="FunFam" id="3.40.50.300:FF:000009">
    <property type="entry name" value="CTP synthase"/>
    <property type="match status" value="1"/>
</dbReference>
<dbReference type="FunFam" id="3.40.50.880:FF:000002">
    <property type="entry name" value="CTP synthase"/>
    <property type="match status" value="1"/>
</dbReference>
<dbReference type="Gene3D" id="3.40.50.880">
    <property type="match status" value="1"/>
</dbReference>
<dbReference type="Gene3D" id="3.40.50.300">
    <property type="entry name" value="P-loop containing nucleotide triphosphate hydrolases"/>
    <property type="match status" value="1"/>
</dbReference>
<dbReference type="HAMAP" id="MF_01227">
    <property type="entry name" value="PyrG"/>
    <property type="match status" value="1"/>
</dbReference>
<dbReference type="InterPro" id="IPR029062">
    <property type="entry name" value="Class_I_gatase-like"/>
</dbReference>
<dbReference type="InterPro" id="IPR004468">
    <property type="entry name" value="CTP_synthase"/>
</dbReference>
<dbReference type="InterPro" id="IPR017456">
    <property type="entry name" value="CTP_synthase_N"/>
</dbReference>
<dbReference type="InterPro" id="IPR017926">
    <property type="entry name" value="GATASE"/>
</dbReference>
<dbReference type="InterPro" id="IPR033828">
    <property type="entry name" value="GATase1_CTP_Synthase"/>
</dbReference>
<dbReference type="InterPro" id="IPR027417">
    <property type="entry name" value="P-loop_NTPase"/>
</dbReference>
<dbReference type="NCBIfam" id="NF003792">
    <property type="entry name" value="PRK05380.1"/>
    <property type="match status" value="1"/>
</dbReference>
<dbReference type="NCBIfam" id="TIGR00337">
    <property type="entry name" value="PyrG"/>
    <property type="match status" value="1"/>
</dbReference>
<dbReference type="PANTHER" id="PTHR11550">
    <property type="entry name" value="CTP SYNTHASE"/>
    <property type="match status" value="1"/>
</dbReference>
<dbReference type="PANTHER" id="PTHR11550:SF0">
    <property type="entry name" value="CTP SYNTHASE-RELATED"/>
    <property type="match status" value="1"/>
</dbReference>
<dbReference type="Pfam" id="PF06418">
    <property type="entry name" value="CTP_synth_N"/>
    <property type="match status" value="1"/>
</dbReference>
<dbReference type="Pfam" id="PF00117">
    <property type="entry name" value="GATase"/>
    <property type="match status" value="1"/>
</dbReference>
<dbReference type="SUPFAM" id="SSF52317">
    <property type="entry name" value="Class I glutamine amidotransferase-like"/>
    <property type="match status" value="1"/>
</dbReference>
<dbReference type="SUPFAM" id="SSF52540">
    <property type="entry name" value="P-loop containing nucleoside triphosphate hydrolases"/>
    <property type="match status" value="1"/>
</dbReference>
<dbReference type="PROSITE" id="PS51273">
    <property type="entry name" value="GATASE_TYPE_1"/>
    <property type="match status" value="1"/>
</dbReference>
<reference key="1">
    <citation type="journal article" date="2007" name="Nat. Biotechnol.">
        <title>Genome sequence and identification of candidate vaccine antigens from the animal pathogen Dichelobacter nodosus.</title>
        <authorList>
            <person name="Myers G.S.A."/>
            <person name="Parker D."/>
            <person name="Al-Hasani K."/>
            <person name="Kennan R.M."/>
            <person name="Seemann T."/>
            <person name="Ren Q."/>
            <person name="Badger J.H."/>
            <person name="Selengut J.D."/>
            <person name="Deboy R.T."/>
            <person name="Tettelin H."/>
            <person name="Boyce J.D."/>
            <person name="McCarl V.P."/>
            <person name="Han X."/>
            <person name="Nelson W.C."/>
            <person name="Madupu R."/>
            <person name="Mohamoud Y."/>
            <person name="Holley T."/>
            <person name="Fedorova N."/>
            <person name="Khouri H."/>
            <person name="Bottomley S.P."/>
            <person name="Whittington R.J."/>
            <person name="Adler B."/>
            <person name="Songer J.G."/>
            <person name="Rood J.I."/>
            <person name="Paulsen I.T."/>
        </authorList>
    </citation>
    <scope>NUCLEOTIDE SEQUENCE [LARGE SCALE GENOMIC DNA]</scope>
    <source>
        <strain>VCS1703A</strain>
    </source>
</reference>
<feature type="chain" id="PRO_1000139437" description="CTP synthase">
    <location>
        <begin position="1"/>
        <end position="544"/>
    </location>
</feature>
<feature type="domain" description="Glutamine amidotransferase type-1" evidence="1">
    <location>
        <begin position="290"/>
        <end position="541"/>
    </location>
</feature>
<feature type="region of interest" description="Amidoligase domain" evidence="1">
    <location>
        <begin position="1"/>
        <end position="265"/>
    </location>
</feature>
<feature type="active site" description="Nucleophile; for glutamine hydrolysis" evidence="1">
    <location>
        <position position="378"/>
    </location>
</feature>
<feature type="active site" evidence="1">
    <location>
        <position position="514"/>
    </location>
</feature>
<feature type="active site" evidence="1">
    <location>
        <position position="516"/>
    </location>
</feature>
<feature type="binding site" evidence="1">
    <location>
        <position position="13"/>
    </location>
    <ligand>
        <name>CTP</name>
        <dbReference type="ChEBI" id="CHEBI:37563"/>
        <note>allosteric inhibitor</note>
    </ligand>
</feature>
<feature type="binding site" evidence="1">
    <location>
        <position position="13"/>
    </location>
    <ligand>
        <name>UTP</name>
        <dbReference type="ChEBI" id="CHEBI:46398"/>
    </ligand>
</feature>
<feature type="binding site" evidence="1">
    <location>
        <begin position="14"/>
        <end position="19"/>
    </location>
    <ligand>
        <name>ATP</name>
        <dbReference type="ChEBI" id="CHEBI:30616"/>
    </ligand>
</feature>
<feature type="binding site" evidence="1">
    <location>
        <position position="71"/>
    </location>
    <ligand>
        <name>ATP</name>
        <dbReference type="ChEBI" id="CHEBI:30616"/>
    </ligand>
</feature>
<feature type="binding site" evidence="1">
    <location>
        <position position="71"/>
    </location>
    <ligand>
        <name>Mg(2+)</name>
        <dbReference type="ChEBI" id="CHEBI:18420"/>
    </ligand>
</feature>
<feature type="binding site" evidence="1">
    <location>
        <position position="139"/>
    </location>
    <ligand>
        <name>Mg(2+)</name>
        <dbReference type="ChEBI" id="CHEBI:18420"/>
    </ligand>
</feature>
<feature type="binding site" evidence="1">
    <location>
        <begin position="146"/>
        <end position="148"/>
    </location>
    <ligand>
        <name>CTP</name>
        <dbReference type="ChEBI" id="CHEBI:37563"/>
        <note>allosteric inhibitor</note>
    </ligand>
</feature>
<feature type="binding site" evidence="1">
    <location>
        <begin position="186"/>
        <end position="191"/>
    </location>
    <ligand>
        <name>CTP</name>
        <dbReference type="ChEBI" id="CHEBI:37563"/>
        <note>allosteric inhibitor</note>
    </ligand>
</feature>
<feature type="binding site" evidence="1">
    <location>
        <begin position="186"/>
        <end position="191"/>
    </location>
    <ligand>
        <name>UTP</name>
        <dbReference type="ChEBI" id="CHEBI:46398"/>
    </ligand>
</feature>
<feature type="binding site" evidence="1">
    <location>
        <position position="222"/>
    </location>
    <ligand>
        <name>CTP</name>
        <dbReference type="ChEBI" id="CHEBI:37563"/>
        <note>allosteric inhibitor</note>
    </ligand>
</feature>
<feature type="binding site" evidence="1">
    <location>
        <position position="222"/>
    </location>
    <ligand>
        <name>UTP</name>
        <dbReference type="ChEBI" id="CHEBI:46398"/>
    </ligand>
</feature>
<feature type="binding site" evidence="1">
    <location>
        <position position="351"/>
    </location>
    <ligand>
        <name>L-glutamine</name>
        <dbReference type="ChEBI" id="CHEBI:58359"/>
    </ligand>
</feature>
<feature type="binding site" evidence="1">
    <location>
        <begin position="379"/>
        <end position="382"/>
    </location>
    <ligand>
        <name>L-glutamine</name>
        <dbReference type="ChEBI" id="CHEBI:58359"/>
    </ligand>
</feature>
<feature type="binding site" evidence="1">
    <location>
        <position position="402"/>
    </location>
    <ligand>
        <name>L-glutamine</name>
        <dbReference type="ChEBI" id="CHEBI:58359"/>
    </ligand>
</feature>
<feature type="binding site" evidence="1">
    <location>
        <position position="469"/>
    </location>
    <ligand>
        <name>L-glutamine</name>
        <dbReference type="ChEBI" id="CHEBI:58359"/>
    </ligand>
</feature>
<protein>
    <recommendedName>
        <fullName evidence="1">CTP synthase</fullName>
        <ecNumber evidence="1">6.3.4.2</ecNumber>
    </recommendedName>
    <alternativeName>
        <fullName evidence="1">Cytidine 5'-triphosphate synthase</fullName>
    </alternativeName>
    <alternativeName>
        <fullName evidence="1">Cytidine triphosphate synthetase</fullName>
        <shortName evidence="1">CTP synthetase</shortName>
        <shortName evidence="1">CTPS</shortName>
    </alternativeName>
    <alternativeName>
        <fullName evidence="1">UTP--ammonia ligase</fullName>
    </alternativeName>
</protein>
<accession>A5EW22</accession>
<name>PYRG_DICNV</name>
<gene>
    <name evidence="1" type="primary">pyrG</name>
    <name type="ordered locus">DNO_0360</name>
</gene>
<evidence type="ECO:0000255" key="1">
    <source>
        <dbReference type="HAMAP-Rule" id="MF_01227"/>
    </source>
</evidence>
<keyword id="KW-0067">ATP-binding</keyword>
<keyword id="KW-0315">Glutamine amidotransferase</keyword>
<keyword id="KW-0436">Ligase</keyword>
<keyword id="KW-0460">Magnesium</keyword>
<keyword id="KW-0479">Metal-binding</keyword>
<keyword id="KW-0547">Nucleotide-binding</keyword>
<keyword id="KW-0665">Pyrimidine biosynthesis</keyword>
<keyword id="KW-1185">Reference proteome</keyword>
<organism>
    <name type="scientific">Dichelobacter nodosus (strain VCS1703A)</name>
    <dbReference type="NCBI Taxonomy" id="246195"/>
    <lineage>
        <taxon>Bacteria</taxon>
        <taxon>Pseudomonadati</taxon>
        <taxon>Pseudomonadota</taxon>
        <taxon>Gammaproteobacteria</taxon>
        <taxon>Cardiobacteriales</taxon>
        <taxon>Cardiobacteriaceae</taxon>
        <taxon>Dichelobacter</taxon>
    </lineage>
</organism>
<proteinExistence type="inferred from homology"/>
<sequence>MTQYIFITGGVVSSLGKGISAASLGAILEARGLRITMIKLDPYINVDPGTMSPFQHGEVFVTHDGAETDLDLGHYERFVNMRATQFHNCTAGRVYLEVIQRERKGDYLGKTVQVIPHITDTIQQYILRAAQGADIAMVEIGGTVGDIESLPFMEAIRQLGTKLGRRDTMFIHLTLVPFISAAGELKTKPTQHSVKELRSIGIQPDMLICRADREIPEDEKAKISLFTNVPAKAVISGLSVKNIYEIPMLYQKQGVDDLVVKHFGLHVKEANLGDWEKVVDAINHPEHEVTVAMVGKYVNLTDAYKSLNEALYHAGIKNKTKVNIRYVDSEDLYSQGTELLAGVDAIVVPGGFGNRGVNGKLRAVQYAREENIPYLGICLGLQIAVVEFARNVLGIKNACSTEWDEKTDEPIIALVAQWVNERGEVEQRDKKMDLGGTLRLGALPAKLKAGSKIATIYGSEIMNERHRHRYEVNANYEKRLEAAGMRISGRSADNDLVEVIEIPSHRWFIGLQSHPEFTSTPLGGHPLFSAFIAAALDYQTERLS</sequence>